<feature type="chain" id="PRO_1000164092" description="Redox-sensing transcriptional repressor Rex">
    <location>
        <begin position="1"/>
        <end position="213"/>
    </location>
</feature>
<feature type="DNA-binding region" description="H-T-H motif" evidence="2">
    <location>
        <begin position="18"/>
        <end position="57"/>
    </location>
</feature>
<feature type="binding site" evidence="2">
    <location>
        <begin position="92"/>
        <end position="97"/>
    </location>
    <ligand>
        <name>NAD(+)</name>
        <dbReference type="ChEBI" id="CHEBI:57540"/>
    </ligand>
</feature>
<name>REX_STRZT</name>
<dbReference type="EMBL" id="CP000921">
    <property type="protein sequence ID" value="ACO23516.1"/>
    <property type="molecule type" value="Genomic_DNA"/>
</dbReference>
<dbReference type="RefSeq" id="WP_000653403.1">
    <property type="nucleotide sequence ID" value="NC_012469.1"/>
</dbReference>
<dbReference type="SMR" id="C1CRJ3"/>
<dbReference type="KEGG" id="snt:SPT_1136"/>
<dbReference type="HOGENOM" id="CLU_061534_1_1_9"/>
<dbReference type="GO" id="GO:0005737">
    <property type="term" value="C:cytoplasm"/>
    <property type="evidence" value="ECO:0007669"/>
    <property type="project" value="UniProtKB-SubCell"/>
</dbReference>
<dbReference type="GO" id="GO:0003677">
    <property type="term" value="F:DNA binding"/>
    <property type="evidence" value="ECO:0007669"/>
    <property type="project" value="UniProtKB-UniRule"/>
</dbReference>
<dbReference type="GO" id="GO:0003700">
    <property type="term" value="F:DNA-binding transcription factor activity"/>
    <property type="evidence" value="ECO:0007669"/>
    <property type="project" value="UniProtKB-UniRule"/>
</dbReference>
<dbReference type="GO" id="GO:0045892">
    <property type="term" value="P:negative regulation of DNA-templated transcription"/>
    <property type="evidence" value="ECO:0007669"/>
    <property type="project" value="InterPro"/>
</dbReference>
<dbReference type="GO" id="GO:0051775">
    <property type="term" value="P:response to redox state"/>
    <property type="evidence" value="ECO:0007669"/>
    <property type="project" value="InterPro"/>
</dbReference>
<dbReference type="Gene3D" id="3.40.50.720">
    <property type="entry name" value="NAD(P)-binding Rossmann-like Domain"/>
    <property type="match status" value="1"/>
</dbReference>
<dbReference type="Gene3D" id="1.10.10.10">
    <property type="entry name" value="Winged helix-like DNA-binding domain superfamily/Winged helix DNA-binding domain"/>
    <property type="match status" value="1"/>
</dbReference>
<dbReference type="HAMAP" id="MF_01131">
    <property type="entry name" value="Rex"/>
    <property type="match status" value="1"/>
</dbReference>
<dbReference type="InterPro" id="IPR003781">
    <property type="entry name" value="CoA-bd"/>
</dbReference>
<dbReference type="InterPro" id="IPR036291">
    <property type="entry name" value="NAD(P)-bd_dom_sf"/>
</dbReference>
<dbReference type="InterPro" id="IPR009718">
    <property type="entry name" value="Rex_DNA-bd_C_dom"/>
</dbReference>
<dbReference type="InterPro" id="IPR022876">
    <property type="entry name" value="Tscrpt_rep_Rex"/>
</dbReference>
<dbReference type="InterPro" id="IPR036388">
    <property type="entry name" value="WH-like_DNA-bd_sf"/>
</dbReference>
<dbReference type="InterPro" id="IPR036390">
    <property type="entry name" value="WH_DNA-bd_sf"/>
</dbReference>
<dbReference type="NCBIfam" id="NF003988">
    <property type="entry name" value="PRK05472.1-1"/>
    <property type="match status" value="1"/>
</dbReference>
<dbReference type="NCBIfam" id="NF003989">
    <property type="entry name" value="PRK05472.1-3"/>
    <property type="match status" value="1"/>
</dbReference>
<dbReference type="NCBIfam" id="NF003991">
    <property type="entry name" value="PRK05472.1-5"/>
    <property type="match status" value="1"/>
</dbReference>
<dbReference type="NCBIfam" id="NF003994">
    <property type="entry name" value="PRK05472.2-3"/>
    <property type="match status" value="1"/>
</dbReference>
<dbReference type="NCBIfam" id="NF003995">
    <property type="entry name" value="PRK05472.2-4"/>
    <property type="match status" value="1"/>
</dbReference>
<dbReference type="NCBIfam" id="NF003996">
    <property type="entry name" value="PRK05472.2-5"/>
    <property type="match status" value="1"/>
</dbReference>
<dbReference type="PANTHER" id="PTHR35786">
    <property type="entry name" value="REDOX-SENSING TRANSCRIPTIONAL REPRESSOR REX"/>
    <property type="match status" value="1"/>
</dbReference>
<dbReference type="PANTHER" id="PTHR35786:SF1">
    <property type="entry name" value="REDOX-SENSING TRANSCRIPTIONAL REPRESSOR REX 1"/>
    <property type="match status" value="1"/>
</dbReference>
<dbReference type="Pfam" id="PF02629">
    <property type="entry name" value="CoA_binding"/>
    <property type="match status" value="1"/>
</dbReference>
<dbReference type="Pfam" id="PF06971">
    <property type="entry name" value="Put_DNA-bind_N"/>
    <property type="match status" value="1"/>
</dbReference>
<dbReference type="SMART" id="SM00881">
    <property type="entry name" value="CoA_binding"/>
    <property type="match status" value="1"/>
</dbReference>
<dbReference type="SUPFAM" id="SSF51735">
    <property type="entry name" value="NAD(P)-binding Rossmann-fold domains"/>
    <property type="match status" value="1"/>
</dbReference>
<dbReference type="SUPFAM" id="SSF46785">
    <property type="entry name" value="Winged helix' DNA-binding domain"/>
    <property type="match status" value="1"/>
</dbReference>
<comment type="function">
    <text evidence="1 2">Modulates transcription in response to changes in cellular NADH/NAD(+) redox state (By similarity). Binds to the promoter of the aldehyde-alcohol dehydrogenase adhE gene. Functions as a redox-dependent repressor of adhE expression (By similarity).</text>
</comment>
<comment type="subunit">
    <text evidence="2">Homodimer.</text>
</comment>
<comment type="subcellular location">
    <subcellularLocation>
        <location evidence="2">Cytoplasm</location>
    </subcellularLocation>
</comment>
<comment type="similarity">
    <text evidence="2">Belongs to the transcriptional regulatory Rex family.</text>
</comment>
<evidence type="ECO:0000250" key="1">
    <source>
        <dbReference type="UniProtKB" id="Q04KJ6"/>
    </source>
</evidence>
<evidence type="ECO:0000255" key="2">
    <source>
        <dbReference type="HAMAP-Rule" id="MF_01131"/>
    </source>
</evidence>
<accession>C1CRJ3</accession>
<protein>
    <recommendedName>
        <fullName evidence="2">Redox-sensing transcriptional repressor Rex</fullName>
    </recommendedName>
</protein>
<sequence>MKDKQFAIPKATAKRLSLYYRIFKRFHAEKIERANSKQIAEAIGIDSATVRRDFSYFGELGRRGFGYDVKKLMTFFADLLNDNSITNVMLVGIGNMGHALLHYRFHERNKMKIIMAFDLDDHPEVGTQTPDGIPIYGISQIKDKIKDADVKTAILTVPSVKSQEVANLLVDAGVKGILSFSPVHLHLPKDVVVQYVDLTSELQTLLYFMRKED</sequence>
<reference key="1">
    <citation type="journal article" date="2010" name="Genome Biol.">
        <title>Structure and dynamics of the pan-genome of Streptococcus pneumoniae and closely related species.</title>
        <authorList>
            <person name="Donati C."/>
            <person name="Hiller N.L."/>
            <person name="Tettelin H."/>
            <person name="Muzzi A."/>
            <person name="Croucher N.J."/>
            <person name="Angiuoli S.V."/>
            <person name="Oggioni M."/>
            <person name="Dunning Hotopp J.C."/>
            <person name="Hu F.Z."/>
            <person name="Riley D.R."/>
            <person name="Covacci A."/>
            <person name="Mitchell T.J."/>
            <person name="Bentley S.D."/>
            <person name="Kilian M."/>
            <person name="Ehrlich G.D."/>
            <person name="Rappuoli R."/>
            <person name="Moxon E.R."/>
            <person name="Masignani V."/>
        </authorList>
    </citation>
    <scope>NUCLEOTIDE SEQUENCE [LARGE SCALE GENOMIC DNA]</scope>
    <source>
        <strain>Taiwan19F-14</strain>
    </source>
</reference>
<keyword id="KW-0963">Cytoplasm</keyword>
<keyword id="KW-0238">DNA-binding</keyword>
<keyword id="KW-0520">NAD</keyword>
<keyword id="KW-0678">Repressor</keyword>
<keyword id="KW-0804">Transcription</keyword>
<keyword id="KW-0805">Transcription regulation</keyword>
<organism>
    <name type="scientific">Streptococcus pneumoniae (strain Taiwan19F-14)</name>
    <dbReference type="NCBI Taxonomy" id="487213"/>
    <lineage>
        <taxon>Bacteria</taxon>
        <taxon>Bacillati</taxon>
        <taxon>Bacillota</taxon>
        <taxon>Bacilli</taxon>
        <taxon>Lactobacillales</taxon>
        <taxon>Streptococcaceae</taxon>
        <taxon>Streptococcus</taxon>
    </lineage>
</organism>
<gene>
    <name evidence="2" type="primary">rex</name>
    <name type="ordered locus">SPT_1136</name>
</gene>
<proteinExistence type="inferred from homology"/>